<proteinExistence type="inferred from homology"/>
<reference key="1">
    <citation type="journal article" date="2003" name="Lancet">
        <title>Sequencing and analysis of the genome of the Whipple's disease bacterium Tropheryma whipplei.</title>
        <authorList>
            <person name="Bentley S.D."/>
            <person name="Maiwald M."/>
            <person name="Murphy L.D."/>
            <person name="Pallen M.J."/>
            <person name="Yeats C.A."/>
            <person name="Dover L.G."/>
            <person name="Norbertczak H.T."/>
            <person name="Besra G.S."/>
            <person name="Quail M.A."/>
            <person name="Harris D.E."/>
            <person name="von Herbay A."/>
            <person name="Goble A."/>
            <person name="Rutter S."/>
            <person name="Squares R."/>
            <person name="Squares S."/>
            <person name="Barrell B.G."/>
            <person name="Parkhill J."/>
            <person name="Relman D.A."/>
        </authorList>
    </citation>
    <scope>NUCLEOTIDE SEQUENCE [LARGE SCALE GENOMIC DNA]</scope>
    <source>
        <strain>TW08/27</strain>
    </source>
</reference>
<evidence type="ECO:0000255" key="1">
    <source>
        <dbReference type="HAMAP-Rule" id="MF_00003"/>
    </source>
</evidence>
<gene>
    <name evidence="1" type="primary">rbfA</name>
    <name type="ordered locus">TW613</name>
</gene>
<feature type="chain" id="PRO_0000102762" description="Ribosome-binding factor A">
    <location>
        <begin position="1"/>
        <end position="196"/>
    </location>
</feature>
<comment type="function">
    <text evidence="1">One of several proteins that assist in the late maturation steps of the functional core of the 30S ribosomal subunit. Associates with free 30S ribosomal subunits (but not with 30S subunits that are part of 70S ribosomes or polysomes). Required for efficient processing of 16S rRNA. May interact with the 5'-terminal helix region of 16S rRNA.</text>
</comment>
<comment type="subunit">
    <text evidence="1">Monomer. Binds 30S ribosomal subunits, but not 50S ribosomal subunits or 70S ribosomes.</text>
</comment>
<comment type="subcellular location">
    <subcellularLocation>
        <location evidence="1">Cytoplasm</location>
    </subcellularLocation>
</comment>
<comment type="similarity">
    <text evidence="1">Belongs to the RbfA family.</text>
</comment>
<protein>
    <recommendedName>
        <fullName evidence="1">Ribosome-binding factor A</fullName>
    </recommendedName>
</protein>
<keyword id="KW-0963">Cytoplasm</keyword>
<keyword id="KW-0690">Ribosome biogenesis</keyword>
<dbReference type="EMBL" id="BX251412">
    <property type="protein sequence ID" value="CAD67277.1"/>
    <property type="molecule type" value="Genomic_DNA"/>
</dbReference>
<dbReference type="SMR" id="Q83ND3"/>
<dbReference type="KEGG" id="tws:TW613"/>
<dbReference type="HOGENOM" id="CLU_1389689_0_0_11"/>
<dbReference type="GO" id="GO:0005829">
    <property type="term" value="C:cytosol"/>
    <property type="evidence" value="ECO:0007669"/>
    <property type="project" value="TreeGrafter"/>
</dbReference>
<dbReference type="GO" id="GO:0043024">
    <property type="term" value="F:ribosomal small subunit binding"/>
    <property type="evidence" value="ECO:0007669"/>
    <property type="project" value="TreeGrafter"/>
</dbReference>
<dbReference type="GO" id="GO:0030490">
    <property type="term" value="P:maturation of SSU-rRNA"/>
    <property type="evidence" value="ECO:0007669"/>
    <property type="project" value="UniProtKB-UniRule"/>
</dbReference>
<dbReference type="Gene3D" id="3.30.300.20">
    <property type="match status" value="1"/>
</dbReference>
<dbReference type="HAMAP" id="MF_00003">
    <property type="entry name" value="RbfA"/>
    <property type="match status" value="1"/>
</dbReference>
<dbReference type="InterPro" id="IPR015946">
    <property type="entry name" value="KH_dom-like_a/b"/>
</dbReference>
<dbReference type="InterPro" id="IPR000238">
    <property type="entry name" value="RbfA"/>
</dbReference>
<dbReference type="InterPro" id="IPR023799">
    <property type="entry name" value="RbfA_dom_sf"/>
</dbReference>
<dbReference type="NCBIfam" id="TIGR00082">
    <property type="entry name" value="rbfA"/>
    <property type="match status" value="1"/>
</dbReference>
<dbReference type="PANTHER" id="PTHR33515">
    <property type="entry name" value="RIBOSOME-BINDING FACTOR A, CHLOROPLASTIC-RELATED"/>
    <property type="match status" value="1"/>
</dbReference>
<dbReference type="PANTHER" id="PTHR33515:SF1">
    <property type="entry name" value="RIBOSOME-BINDING FACTOR A, CHLOROPLASTIC-RELATED"/>
    <property type="match status" value="1"/>
</dbReference>
<dbReference type="Pfam" id="PF02033">
    <property type="entry name" value="RBFA"/>
    <property type="match status" value="1"/>
</dbReference>
<dbReference type="SUPFAM" id="SSF89919">
    <property type="entry name" value="Ribosome-binding factor A, RbfA"/>
    <property type="match status" value="1"/>
</dbReference>
<sequence length="196" mass="21760">MDRVKEFAMKDQIRAHRMAGRIRHLISRQIETKLRDQLGLVTITEVQVTGDLHHAKVFVTVYGTKDEAQTALKILEDNRANFRRSLGVLKVRFVPTVEFELDRLFEDAGIMDELIQRARESDKRIAAGASGPIDNDATALMDKVVDQEARNPDSWHTAPTSSSHTAGLCLVRASSPIACNIDSTTLCKPRTPGPGL</sequence>
<organism>
    <name type="scientific">Tropheryma whipplei (strain TW08/27)</name>
    <name type="common">Whipple's bacillus</name>
    <dbReference type="NCBI Taxonomy" id="218496"/>
    <lineage>
        <taxon>Bacteria</taxon>
        <taxon>Bacillati</taxon>
        <taxon>Actinomycetota</taxon>
        <taxon>Actinomycetes</taxon>
        <taxon>Micrococcales</taxon>
        <taxon>Tropherymataceae</taxon>
        <taxon>Tropheryma</taxon>
    </lineage>
</organism>
<name>RBFA_TROW8</name>
<accession>Q83ND3</accession>